<organism>
    <name type="scientific">Novosphingobium aromaticivorans (strain ATCC 700278 / DSM 12444 / CCUG 56034 / CIP 105152 / NBRC 16084 / F199)</name>
    <dbReference type="NCBI Taxonomy" id="279238"/>
    <lineage>
        <taxon>Bacteria</taxon>
        <taxon>Pseudomonadati</taxon>
        <taxon>Pseudomonadota</taxon>
        <taxon>Alphaproteobacteria</taxon>
        <taxon>Sphingomonadales</taxon>
        <taxon>Sphingomonadaceae</taxon>
        <taxon>Novosphingobium</taxon>
    </lineage>
</organism>
<comment type="function">
    <text evidence="1">Accelerates the degradation of transcripts by removing pyrophosphate from the 5'-end of triphosphorylated RNA, leading to a more labile monophosphorylated state that can stimulate subsequent ribonuclease cleavage.</text>
</comment>
<comment type="cofactor">
    <cofactor evidence="1">
        <name>a divalent metal cation</name>
        <dbReference type="ChEBI" id="CHEBI:60240"/>
    </cofactor>
</comment>
<comment type="similarity">
    <text evidence="1">Belongs to the Nudix hydrolase family. RppH subfamily.</text>
</comment>
<dbReference type="EC" id="3.6.1.-" evidence="1"/>
<dbReference type="EMBL" id="CP000248">
    <property type="protein sequence ID" value="ABD26195.1"/>
    <property type="molecule type" value="Genomic_DNA"/>
</dbReference>
<dbReference type="RefSeq" id="WP_011445405.1">
    <property type="nucleotide sequence ID" value="NC_007794.1"/>
</dbReference>
<dbReference type="SMR" id="Q2G7H8"/>
<dbReference type="STRING" id="279238.Saro_1755"/>
<dbReference type="KEGG" id="nar:Saro_1755"/>
<dbReference type="eggNOG" id="COG1051">
    <property type="taxonomic scope" value="Bacteria"/>
</dbReference>
<dbReference type="HOGENOM" id="CLU_087195_3_0_5"/>
<dbReference type="Proteomes" id="UP000009134">
    <property type="component" value="Chromosome"/>
</dbReference>
<dbReference type="GO" id="GO:0034432">
    <property type="term" value="F:bis(5'-adenosyl)-pentaphosphatase activity"/>
    <property type="evidence" value="ECO:0007669"/>
    <property type="project" value="TreeGrafter"/>
</dbReference>
<dbReference type="GO" id="GO:0008893">
    <property type="term" value="F:guanosine-3',5'-bis(diphosphate) 3'-diphosphatase activity"/>
    <property type="evidence" value="ECO:0007669"/>
    <property type="project" value="TreeGrafter"/>
</dbReference>
<dbReference type="GO" id="GO:0006753">
    <property type="term" value="P:nucleoside phosphate metabolic process"/>
    <property type="evidence" value="ECO:0007669"/>
    <property type="project" value="TreeGrafter"/>
</dbReference>
<dbReference type="GO" id="GO:0019693">
    <property type="term" value="P:ribose phosphate metabolic process"/>
    <property type="evidence" value="ECO:0007669"/>
    <property type="project" value="TreeGrafter"/>
</dbReference>
<dbReference type="CDD" id="cd03671">
    <property type="entry name" value="NUDIX_Ap4A_hydrolase_plant_like"/>
    <property type="match status" value="1"/>
</dbReference>
<dbReference type="Gene3D" id="3.90.79.10">
    <property type="entry name" value="Nucleoside Triphosphate Pyrophosphohydrolase"/>
    <property type="match status" value="1"/>
</dbReference>
<dbReference type="HAMAP" id="MF_00298">
    <property type="entry name" value="Nudix_RppH"/>
    <property type="match status" value="1"/>
</dbReference>
<dbReference type="InterPro" id="IPR020476">
    <property type="entry name" value="Nudix_hydrolase"/>
</dbReference>
<dbReference type="InterPro" id="IPR015797">
    <property type="entry name" value="NUDIX_hydrolase-like_dom_sf"/>
</dbReference>
<dbReference type="InterPro" id="IPR020084">
    <property type="entry name" value="NUDIX_hydrolase_CS"/>
</dbReference>
<dbReference type="InterPro" id="IPR000086">
    <property type="entry name" value="NUDIX_hydrolase_dom"/>
</dbReference>
<dbReference type="InterPro" id="IPR022927">
    <property type="entry name" value="RppH"/>
</dbReference>
<dbReference type="NCBIfam" id="NF001938">
    <property type="entry name" value="PRK00714.1-5"/>
    <property type="match status" value="1"/>
</dbReference>
<dbReference type="PANTHER" id="PTHR11839:SF22">
    <property type="entry name" value="NUDIX HYDROLASE 26, CHLOROPLASTIC"/>
    <property type="match status" value="1"/>
</dbReference>
<dbReference type="PANTHER" id="PTHR11839">
    <property type="entry name" value="UDP/ADP-SUGAR PYROPHOSPHATASE"/>
    <property type="match status" value="1"/>
</dbReference>
<dbReference type="Pfam" id="PF00293">
    <property type="entry name" value="NUDIX"/>
    <property type="match status" value="1"/>
</dbReference>
<dbReference type="PRINTS" id="PR00502">
    <property type="entry name" value="NUDIXFAMILY"/>
</dbReference>
<dbReference type="SUPFAM" id="SSF55811">
    <property type="entry name" value="Nudix"/>
    <property type="match status" value="1"/>
</dbReference>
<dbReference type="PROSITE" id="PS51462">
    <property type="entry name" value="NUDIX"/>
    <property type="match status" value="1"/>
</dbReference>
<dbReference type="PROSITE" id="PS00893">
    <property type="entry name" value="NUDIX_BOX"/>
    <property type="match status" value="1"/>
</dbReference>
<feature type="chain" id="PRO_1000021966" description="RNA pyrophosphohydrolase">
    <location>
        <begin position="1"/>
        <end position="161"/>
    </location>
</feature>
<feature type="domain" description="Nudix hydrolase" evidence="1">
    <location>
        <begin position="9"/>
        <end position="155"/>
    </location>
</feature>
<feature type="short sequence motif" description="Nudix box">
    <location>
        <begin position="44"/>
        <end position="65"/>
    </location>
</feature>
<proteinExistence type="inferred from homology"/>
<protein>
    <recommendedName>
        <fullName evidence="1">RNA pyrophosphohydrolase</fullName>
        <ecNumber evidence="1">3.6.1.-</ecNumber>
    </recommendedName>
    <alternativeName>
        <fullName evidence="1">(Di)nucleoside polyphosphate hydrolase</fullName>
    </alternativeName>
</protein>
<sequence length="161" mass="18518">MNDAFAGLPYRPCVGVMLVNSQGRVFVGRRIDDKDGVAWQMPQGGIDDGEELHPAALRELSEETGVAAELVTIIAESREEHLYDLPDELIGKLWGGQYRGQRQKWLLLRFAGEDTDIRLDAHDPAEFSEWRWVEPEQLPDLIVPFKRRVYRQVVDEFRDLI</sequence>
<accession>Q2G7H8</accession>
<evidence type="ECO:0000255" key="1">
    <source>
        <dbReference type="HAMAP-Rule" id="MF_00298"/>
    </source>
</evidence>
<keyword id="KW-0378">Hydrolase</keyword>
<keyword id="KW-1185">Reference proteome</keyword>
<gene>
    <name evidence="1" type="primary">rppH</name>
    <name evidence="1" type="synonym">nudH</name>
    <name type="ordered locus">Saro_1755</name>
</gene>
<reference key="1">
    <citation type="submission" date="2006-01" db="EMBL/GenBank/DDBJ databases">
        <title>Complete sequence of Novosphingobium aromaticivorans DSM 12444.</title>
        <authorList>
            <consortium name="US DOE Joint Genome Institute"/>
            <person name="Copeland A."/>
            <person name="Lucas S."/>
            <person name="Lapidus A."/>
            <person name="Barry K."/>
            <person name="Detter J.C."/>
            <person name="Glavina T."/>
            <person name="Hammon N."/>
            <person name="Israni S."/>
            <person name="Pitluck S."/>
            <person name="Chain P."/>
            <person name="Malfatti S."/>
            <person name="Shin M."/>
            <person name="Vergez L."/>
            <person name="Schmutz J."/>
            <person name="Larimer F."/>
            <person name="Land M."/>
            <person name="Kyrpides N."/>
            <person name="Ivanova N."/>
            <person name="Fredrickson J."/>
            <person name="Balkwill D."/>
            <person name="Romine M.F."/>
            <person name="Richardson P."/>
        </authorList>
    </citation>
    <scope>NUCLEOTIDE SEQUENCE [LARGE SCALE GENOMIC DNA]</scope>
    <source>
        <strain>ATCC 700278 / DSM 12444 / CCUG 56034 / CIP 105152 / NBRC 16084 / F199</strain>
    </source>
</reference>
<name>RPPH_NOVAD</name>